<dbReference type="EC" id="7.6.2.7" evidence="1"/>
<dbReference type="EMBL" id="AE016853">
    <property type="protein sequence ID" value="AAO58746.1"/>
    <property type="molecule type" value="Genomic_DNA"/>
</dbReference>
<dbReference type="RefSeq" id="NP_795051.1">
    <property type="nucleotide sequence ID" value="NC_004578.1"/>
</dbReference>
<dbReference type="RefSeq" id="WP_005767098.1">
    <property type="nucleotide sequence ID" value="NC_004578.1"/>
</dbReference>
<dbReference type="SMR" id="Q87UH7"/>
<dbReference type="STRING" id="223283.PSPTO_5320"/>
<dbReference type="GeneID" id="1187005"/>
<dbReference type="KEGG" id="pst:PSPTO_5320"/>
<dbReference type="PATRIC" id="fig|223283.9.peg.5447"/>
<dbReference type="eggNOG" id="COG4525">
    <property type="taxonomic scope" value="Bacteria"/>
</dbReference>
<dbReference type="HOGENOM" id="CLU_000604_1_22_6"/>
<dbReference type="OrthoDB" id="9802264at2"/>
<dbReference type="PhylomeDB" id="Q87UH7"/>
<dbReference type="Proteomes" id="UP000002515">
    <property type="component" value="Chromosome"/>
</dbReference>
<dbReference type="GO" id="GO:0005886">
    <property type="term" value="C:plasma membrane"/>
    <property type="evidence" value="ECO:0007669"/>
    <property type="project" value="UniProtKB-SubCell"/>
</dbReference>
<dbReference type="GO" id="GO:0015411">
    <property type="term" value="F:ABC-type taurine transporter transporter activity"/>
    <property type="evidence" value="ECO:0007669"/>
    <property type="project" value="UniProtKB-EC"/>
</dbReference>
<dbReference type="GO" id="GO:0005524">
    <property type="term" value="F:ATP binding"/>
    <property type="evidence" value="ECO:0007669"/>
    <property type="project" value="UniProtKB-KW"/>
</dbReference>
<dbReference type="GO" id="GO:0016887">
    <property type="term" value="F:ATP hydrolysis activity"/>
    <property type="evidence" value="ECO:0007669"/>
    <property type="project" value="InterPro"/>
</dbReference>
<dbReference type="CDD" id="cd03293">
    <property type="entry name" value="ABC_NrtD_SsuB_transporters"/>
    <property type="match status" value="1"/>
</dbReference>
<dbReference type="Gene3D" id="3.40.50.300">
    <property type="entry name" value="P-loop containing nucleotide triphosphate hydrolases"/>
    <property type="match status" value="1"/>
</dbReference>
<dbReference type="InterPro" id="IPR003593">
    <property type="entry name" value="AAA+_ATPase"/>
</dbReference>
<dbReference type="InterPro" id="IPR003439">
    <property type="entry name" value="ABC_transporter-like_ATP-bd"/>
</dbReference>
<dbReference type="InterPro" id="IPR017871">
    <property type="entry name" value="ABC_transporter-like_CS"/>
</dbReference>
<dbReference type="InterPro" id="IPR050166">
    <property type="entry name" value="ABC_transporter_ATP-bind"/>
</dbReference>
<dbReference type="InterPro" id="IPR027417">
    <property type="entry name" value="P-loop_NTPase"/>
</dbReference>
<dbReference type="NCBIfam" id="NF008421">
    <property type="entry name" value="PRK11248.1"/>
    <property type="match status" value="1"/>
</dbReference>
<dbReference type="PANTHER" id="PTHR42788:SF18">
    <property type="entry name" value="TAURINE IMPORT ATP-BINDING PROTEIN TAUB"/>
    <property type="match status" value="1"/>
</dbReference>
<dbReference type="PANTHER" id="PTHR42788">
    <property type="entry name" value="TAURINE IMPORT ATP-BINDING PROTEIN-RELATED"/>
    <property type="match status" value="1"/>
</dbReference>
<dbReference type="Pfam" id="PF00005">
    <property type="entry name" value="ABC_tran"/>
    <property type="match status" value="1"/>
</dbReference>
<dbReference type="SMART" id="SM00382">
    <property type="entry name" value="AAA"/>
    <property type="match status" value="1"/>
</dbReference>
<dbReference type="SUPFAM" id="SSF52540">
    <property type="entry name" value="P-loop containing nucleoside triphosphate hydrolases"/>
    <property type="match status" value="1"/>
</dbReference>
<dbReference type="PROSITE" id="PS00211">
    <property type="entry name" value="ABC_TRANSPORTER_1"/>
    <property type="match status" value="1"/>
</dbReference>
<dbReference type="PROSITE" id="PS50893">
    <property type="entry name" value="ABC_TRANSPORTER_2"/>
    <property type="match status" value="1"/>
</dbReference>
<dbReference type="PROSITE" id="PS51250">
    <property type="entry name" value="TAUB"/>
    <property type="match status" value="1"/>
</dbReference>
<gene>
    <name evidence="1" type="primary">tauB</name>
    <name type="ordered locus">PSPTO_5320</name>
</gene>
<feature type="chain" id="PRO_0000093014" description="Taurine import ATP-binding protein TauB">
    <location>
        <begin position="1"/>
        <end position="261"/>
    </location>
</feature>
<feature type="domain" description="ABC transporter" evidence="1">
    <location>
        <begin position="4"/>
        <end position="233"/>
    </location>
</feature>
<feature type="binding site" evidence="1">
    <location>
        <begin position="38"/>
        <end position="45"/>
    </location>
    <ligand>
        <name>ATP</name>
        <dbReference type="ChEBI" id="CHEBI:30616"/>
    </ligand>
</feature>
<sequence length="261" mass="28138">MALLQLEGIGAHYPGAAAPVLENINLSLGPQQLLVALGPSGSGKTSLLNLIAGFVTPSGGRITLDGSAVEGPGAERGVVFQDNALLPWQDVLANVAFGLELAGVSRSEREAKAREMLALVDLIGFEQRRIWELSGGQRQRVGLARALAADPRILLMDEPFGALDAFTREQMQELLLQVWQRTAKPVFLITHDIEEAVFLATDLILLAPDPGRIAQHLQLDFGRRYSAGESARAIKSDPGFIETREQVLASVFAQRAGEQRA</sequence>
<comment type="function">
    <text evidence="1">Part of the ABC transporter complex TauABC involved in taurine import. Responsible for energy coupling to the transport system.</text>
</comment>
<comment type="catalytic activity">
    <reaction evidence="1">
        <text>taurine(out) + ATP + H2O = taurine(in) + ADP + phosphate + H(+)</text>
        <dbReference type="Rhea" id="RHEA:14613"/>
        <dbReference type="ChEBI" id="CHEBI:15377"/>
        <dbReference type="ChEBI" id="CHEBI:15378"/>
        <dbReference type="ChEBI" id="CHEBI:30616"/>
        <dbReference type="ChEBI" id="CHEBI:43474"/>
        <dbReference type="ChEBI" id="CHEBI:456216"/>
        <dbReference type="ChEBI" id="CHEBI:507393"/>
        <dbReference type="EC" id="7.6.2.7"/>
    </reaction>
</comment>
<comment type="subunit">
    <text evidence="1">The complex is composed of two ATP-binding proteins (TauB), two transmembrane proteins (TauC) and a solute-binding protein (TauA).</text>
</comment>
<comment type="subcellular location">
    <subcellularLocation>
        <location evidence="1">Cell inner membrane</location>
        <topology evidence="1">Peripheral membrane protein</topology>
    </subcellularLocation>
</comment>
<comment type="similarity">
    <text evidence="1">Belongs to the ABC transporter superfamily. Taurine importer (TC 3.A.1.17.1) family.</text>
</comment>
<proteinExistence type="inferred from homology"/>
<name>TAUB_PSESM</name>
<evidence type="ECO:0000255" key="1">
    <source>
        <dbReference type="HAMAP-Rule" id="MF_01714"/>
    </source>
</evidence>
<keyword id="KW-0067">ATP-binding</keyword>
<keyword id="KW-0997">Cell inner membrane</keyword>
<keyword id="KW-1003">Cell membrane</keyword>
<keyword id="KW-0472">Membrane</keyword>
<keyword id="KW-0547">Nucleotide-binding</keyword>
<keyword id="KW-1185">Reference proteome</keyword>
<keyword id="KW-1278">Translocase</keyword>
<keyword id="KW-0813">Transport</keyword>
<reference key="1">
    <citation type="journal article" date="2003" name="Proc. Natl. Acad. Sci. U.S.A.">
        <title>The complete genome sequence of the Arabidopsis and tomato pathogen Pseudomonas syringae pv. tomato DC3000.</title>
        <authorList>
            <person name="Buell C.R."/>
            <person name="Joardar V."/>
            <person name="Lindeberg M."/>
            <person name="Selengut J."/>
            <person name="Paulsen I.T."/>
            <person name="Gwinn M.L."/>
            <person name="Dodson R.J."/>
            <person name="DeBoy R.T."/>
            <person name="Durkin A.S."/>
            <person name="Kolonay J.F."/>
            <person name="Madupu R."/>
            <person name="Daugherty S.C."/>
            <person name="Brinkac L.M."/>
            <person name="Beanan M.J."/>
            <person name="Haft D.H."/>
            <person name="Nelson W.C."/>
            <person name="Davidsen T.M."/>
            <person name="Zafar N."/>
            <person name="Zhou L."/>
            <person name="Liu J."/>
            <person name="Yuan Q."/>
            <person name="Khouri H.M."/>
            <person name="Fedorova N.B."/>
            <person name="Tran B."/>
            <person name="Russell D."/>
            <person name="Berry K.J."/>
            <person name="Utterback T.R."/>
            <person name="Van Aken S.E."/>
            <person name="Feldblyum T.V."/>
            <person name="D'Ascenzo M."/>
            <person name="Deng W.-L."/>
            <person name="Ramos A.R."/>
            <person name="Alfano J.R."/>
            <person name="Cartinhour S."/>
            <person name="Chatterjee A.K."/>
            <person name="Delaney T.P."/>
            <person name="Lazarowitz S.G."/>
            <person name="Martin G.B."/>
            <person name="Schneider D.J."/>
            <person name="Tang X."/>
            <person name="Bender C.L."/>
            <person name="White O."/>
            <person name="Fraser C.M."/>
            <person name="Collmer A."/>
        </authorList>
    </citation>
    <scope>NUCLEOTIDE SEQUENCE [LARGE SCALE GENOMIC DNA]</scope>
    <source>
        <strain>ATCC BAA-871 / DC3000</strain>
    </source>
</reference>
<organism>
    <name type="scientific">Pseudomonas syringae pv. tomato (strain ATCC BAA-871 / DC3000)</name>
    <dbReference type="NCBI Taxonomy" id="223283"/>
    <lineage>
        <taxon>Bacteria</taxon>
        <taxon>Pseudomonadati</taxon>
        <taxon>Pseudomonadota</taxon>
        <taxon>Gammaproteobacteria</taxon>
        <taxon>Pseudomonadales</taxon>
        <taxon>Pseudomonadaceae</taxon>
        <taxon>Pseudomonas</taxon>
    </lineage>
</organism>
<accession>Q87UH7</accession>
<protein>
    <recommendedName>
        <fullName evidence="1">Taurine import ATP-binding protein TauB</fullName>
        <ecNumber evidence="1">7.6.2.7</ecNumber>
    </recommendedName>
</protein>